<name>GPC1_HUMAN</name>
<protein>
    <recommendedName>
        <fullName>Glypican-1</fullName>
    </recommendedName>
    <component>
        <recommendedName>
            <fullName>Secreted glypican-1</fullName>
        </recommendedName>
    </component>
</protein>
<organism>
    <name type="scientific">Homo sapiens</name>
    <name type="common">Human</name>
    <dbReference type="NCBI Taxonomy" id="9606"/>
    <lineage>
        <taxon>Eukaryota</taxon>
        <taxon>Metazoa</taxon>
        <taxon>Chordata</taxon>
        <taxon>Craniata</taxon>
        <taxon>Vertebrata</taxon>
        <taxon>Euteleostomi</taxon>
        <taxon>Mammalia</taxon>
        <taxon>Eutheria</taxon>
        <taxon>Euarchontoglires</taxon>
        <taxon>Primates</taxon>
        <taxon>Haplorrhini</taxon>
        <taxon>Catarrhini</taxon>
        <taxon>Hominidae</taxon>
        <taxon>Homo</taxon>
    </lineage>
</organism>
<accession>P35052</accession>
<accession>B3KTD1</accession>
<accession>Q53QM4</accession>
<feature type="signal peptide" evidence="12">
    <location>
        <begin position="1"/>
        <end position="23"/>
    </location>
</feature>
<feature type="chain" id="PRO_0000012295" description="Glypican-1">
    <location>
        <begin position="24"/>
        <end position="530"/>
    </location>
</feature>
<feature type="chain" id="PRO_0000333837" description="Secreted glypican-1">
    <location>
        <begin position="24"/>
        <end status="unknown"/>
    </location>
</feature>
<feature type="propeptide" id="PRO_0000012296" description="Removed in mature form" evidence="17">
    <location>
        <begin position="531"/>
        <end position="558"/>
    </location>
</feature>
<feature type="region of interest" description="Disordered" evidence="2">
    <location>
        <begin position="341"/>
        <end position="374"/>
    </location>
</feature>
<feature type="region of interest" description="Disordered" evidence="2">
    <location>
        <begin position="505"/>
        <end position="534"/>
    </location>
</feature>
<feature type="compositionally biased region" description="Basic and acidic residues" evidence="2">
    <location>
        <begin position="355"/>
        <end position="370"/>
    </location>
</feature>
<feature type="lipid moiety-binding region" description="GPI-anchor amidated serine" evidence="18">
    <location>
        <position position="530"/>
    </location>
</feature>
<feature type="glycosylation site" description="N-linked (GlcNAc...) asparagine" evidence="14 15">
    <location>
        <position position="79"/>
    </location>
</feature>
<feature type="glycosylation site" description="N-linked (GlcNAc...) asparagine" evidence="12 14 15">
    <location>
        <position position="116"/>
    </location>
</feature>
<feature type="glycosylation site" description="O-linked (Xyl...) (heparan sulfate) serine" evidence="17">
    <location>
        <position position="486"/>
    </location>
</feature>
<feature type="glycosylation site" description="O-linked (Xyl...) (heparan sulfate) serine" evidence="17">
    <location>
        <position position="488"/>
    </location>
</feature>
<feature type="glycosylation site" description="O-linked (Xyl...) (heparan sulfate) serine" evidence="17">
    <location>
        <position position="490"/>
    </location>
</feature>
<feature type="disulfide bond" evidence="15">
    <location>
        <begin position="32"/>
        <end position="68"/>
    </location>
</feature>
<feature type="disulfide bond" evidence="15">
    <location>
        <begin position="62"/>
        <end position="256"/>
    </location>
</feature>
<feature type="disulfide bond" evidence="15">
    <location>
        <begin position="69"/>
        <end position="259"/>
    </location>
</feature>
<feature type="disulfide bond" evidence="15">
    <location>
        <begin position="191"/>
        <end position="343"/>
    </location>
</feature>
<feature type="disulfide bond" evidence="15">
    <location>
        <begin position="246"/>
        <end position="279"/>
    </location>
</feature>
<feature type="disulfide bond" evidence="15">
    <location>
        <begin position="268"/>
        <end position="415"/>
    </location>
</feature>
<feature type="disulfide bond" evidence="15">
    <location>
        <begin position="272"/>
        <end position="401"/>
    </location>
</feature>
<feature type="splice variant" id="VSP_055225" description="In isoform 2." evidence="16">
    <location>
        <begin position="1"/>
        <end position="72"/>
    </location>
</feature>
<feature type="splice variant" id="VSP_055226" description="In isoform 2." evidence="16">
    <original>DSMVLITDKFWGTSGVESVIGSVHTWLAEAINALQDNRDTLTAKVIQGCGNPKVNPQGPGPEEKR</original>
    <variation>GEPPPARAAWNCLGECTTGGPGGRVVPSLELGPRDLIRDALTRARSGWCCRVEGPGCLLNVLSDV</variation>
    <location>
        <begin position="295"/>
        <end position="359"/>
    </location>
</feature>
<feature type="splice variant" id="VSP_055227" description="In isoform 2." evidence="16">
    <location>
        <begin position="360"/>
        <end position="558"/>
    </location>
</feature>
<feature type="sequence variant" id="VAR_036044" description="In a breast cancer sample; somatic mutation." evidence="7">
    <original>A</original>
    <variation>D</variation>
    <location>
        <position position="337"/>
    </location>
</feature>
<feature type="sequence variant" id="VAR_033977" description="In dbSNP:rs2228331." evidence="5 12">
    <original>S</original>
    <variation>G</variation>
    <location>
        <position position="500"/>
    </location>
</feature>
<feature type="mutagenesis site" description="Protein yield reduced by half. Protein yield reduced by 90%, abolishes N-glycosylation but no effect on secondary structure; when associated with Q-116." evidence="14">
    <original>N</original>
    <variation>Q</variation>
    <location>
        <position position="79"/>
    </location>
</feature>
<feature type="mutagenesis site" description="No effect on protein yield. Protein yield reduced by 90%, abolishes N-glycosylation but no effect on secondary structure; when associated with Q-79." evidence="14">
    <original>N</original>
    <variation>Q</variation>
    <location>
        <position position="116"/>
    </location>
</feature>
<feature type="helix" evidence="20">
    <location>
        <begin position="33"/>
        <end position="40"/>
    </location>
</feature>
<feature type="turn" evidence="20">
    <location>
        <begin position="41"/>
        <end position="43"/>
    </location>
</feature>
<feature type="helix" evidence="20">
    <location>
        <begin position="46"/>
        <end position="48"/>
    </location>
</feature>
<feature type="helix" evidence="19">
    <location>
        <begin position="56"/>
        <end position="58"/>
    </location>
</feature>
<feature type="strand" evidence="20">
    <location>
        <begin position="60"/>
        <end position="62"/>
    </location>
</feature>
<feature type="strand" evidence="20">
    <location>
        <begin position="64"/>
        <end position="68"/>
    </location>
</feature>
<feature type="helix" evidence="20">
    <location>
        <begin position="71"/>
        <end position="130"/>
    </location>
</feature>
<feature type="helix" evidence="20">
    <location>
        <begin position="132"/>
        <end position="135"/>
    </location>
</feature>
<feature type="helix" evidence="20">
    <location>
        <begin position="138"/>
        <end position="153"/>
    </location>
</feature>
<feature type="helix" evidence="20">
    <location>
        <begin position="159"/>
        <end position="178"/>
    </location>
</feature>
<feature type="strand" evidence="20">
    <location>
        <begin position="180"/>
        <end position="182"/>
    </location>
</feature>
<feature type="helix" evidence="20">
    <location>
        <begin position="187"/>
        <end position="192"/>
    </location>
</feature>
<feature type="turn" evidence="20">
    <location>
        <begin position="201"/>
        <end position="204"/>
    </location>
</feature>
<feature type="helix" evidence="20">
    <location>
        <begin position="205"/>
        <end position="237"/>
    </location>
</feature>
<feature type="helix" evidence="20">
    <location>
        <begin position="244"/>
        <end position="254"/>
    </location>
</feature>
<feature type="helix" evidence="20">
    <location>
        <begin position="256"/>
        <end position="259"/>
    </location>
</feature>
<feature type="helix" evidence="20">
    <location>
        <begin position="269"/>
        <end position="279"/>
    </location>
</feature>
<feature type="helix" evidence="20">
    <location>
        <begin position="281"/>
        <end position="284"/>
    </location>
</feature>
<feature type="helix" evidence="20">
    <location>
        <begin position="287"/>
        <end position="300"/>
    </location>
</feature>
<feature type="helix" evidence="20">
    <location>
        <begin position="301"/>
        <end position="304"/>
    </location>
</feature>
<feature type="strand" evidence="20">
    <location>
        <begin position="307"/>
        <end position="310"/>
    </location>
</feature>
<feature type="helix" evidence="20">
    <location>
        <begin position="313"/>
        <end position="315"/>
    </location>
</feature>
<feature type="helix" evidence="20">
    <location>
        <begin position="317"/>
        <end position="329"/>
    </location>
</feature>
<feature type="helix" evidence="20">
    <location>
        <begin position="332"/>
        <end position="335"/>
    </location>
</feature>
<feature type="helix" evidence="20">
    <location>
        <begin position="340"/>
        <end position="343"/>
    </location>
</feature>
<feature type="helix" evidence="20">
    <location>
        <begin position="374"/>
        <end position="388"/>
    </location>
</feature>
<feature type="helix" evidence="20">
    <location>
        <begin position="392"/>
        <end position="403"/>
    </location>
</feature>
<feature type="strand" evidence="20">
    <location>
        <begin position="418"/>
        <end position="422"/>
    </location>
</feature>
<feature type="strand" evidence="20">
    <location>
        <begin position="431"/>
        <end position="433"/>
    </location>
</feature>
<feature type="helix" evidence="20">
    <location>
        <begin position="434"/>
        <end position="436"/>
    </location>
</feature>
<feature type="strand" evidence="20">
    <location>
        <begin position="440"/>
        <end position="442"/>
    </location>
</feature>
<feature type="helix" evidence="20">
    <location>
        <begin position="451"/>
        <end position="472"/>
    </location>
</feature>
<keyword id="KW-0002">3D-structure</keyword>
<keyword id="KW-0025">Alternative splicing</keyword>
<keyword id="KW-1003">Cell membrane</keyword>
<keyword id="KW-0186">Copper</keyword>
<keyword id="KW-0903">Direct protein sequencing</keyword>
<keyword id="KW-1015">Disulfide bond</keyword>
<keyword id="KW-0967">Endosome</keyword>
<keyword id="KW-0325">Glycoprotein</keyword>
<keyword id="KW-0336">GPI-anchor</keyword>
<keyword id="KW-0357">Heparan sulfate</keyword>
<keyword id="KW-0449">Lipoprotein</keyword>
<keyword id="KW-0472">Membrane</keyword>
<keyword id="KW-0654">Proteoglycan</keyword>
<keyword id="KW-1267">Proteomics identification</keyword>
<keyword id="KW-1185">Reference proteome</keyword>
<keyword id="KW-0702">S-nitrosylation</keyword>
<keyword id="KW-0964">Secreted</keyword>
<keyword id="KW-0732">Signal</keyword>
<keyword id="KW-0862">Zinc</keyword>
<dbReference type="EMBL" id="X54232">
    <property type="protein sequence ID" value="CAA38139.1"/>
    <property type="molecule type" value="mRNA"/>
</dbReference>
<dbReference type="EMBL" id="AK095397">
    <property type="protein sequence ID" value="BAG53043.1"/>
    <property type="molecule type" value="mRNA"/>
</dbReference>
<dbReference type="EMBL" id="AK096638">
    <property type="protein sequence ID" value="BAG53345.1"/>
    <property type="molecule type" value="mRNA"/>
</dbReference>
<dbReference type="EMBL" id="AC110619">
    <property type="protein sequence ID" value="AAY24160.1"/>
    <property type="molecule type" value="Genomic_DNA"/>
</dbReference>
<dbReference type="EMBL" id="CH471063">
    <property type="protein sequence ID" value="EAW71180.1"/>
    <property type="molecule type" value="Genomic_DNA"/>
</dbReference>
<dbReference type="EMBL" id="CH471063">
    <property type="protein sequence ID" value="EAW71183.1"/>
    <property type="molecule type" value="Genomic_DNA"/>
</dbReference>
<dbReference type="EMBL" id="BC051279">
    <property type="protein sequence ID" value="AAH51279.1"/>
    <property type="molecule type" value="mRNA"/>
</dbReference>
<dbReference type="CCDS" id="CCDS2534.1">
    <molecule id="P35052-1"/>
</dbReference>
<dbReference type="PIR" id="A36347">
    <property type="entry name" value="A36347"/>
</dbReference>
<dbReference type="RefSeq" id="NP_002072.2">
    <molecule id="P35052-1"/>
    <property type="nucleotide sequence ID" value="NM_002081.3"/>
</dbReference>
<dbReference type="PDB" id="4ACR">
    <property type="method" value="X-ray"/>
    <property type="resolution" value="2.55 A"/>
    <property type="chains" value="A/B/C/D=24-479"/>
</dbReference>
<dbReference type="PDB" id="4AD7">
    <property type="method" value="X-ray"/>
    <property type="resolution" value="2.94 A"/>
    <property type="chains" value="A/B/C/D=24-529"/>
</dbReference>
<dbReference type="PDB" id="4BWE">
    <property type="method" value="X-ray"/>
    <property type="resolution" value="2.46 A"/>
    <property type="chains" value="A/B/C/D=24-479"/>
</dbReference>
<dbReference type="PDB" id="4YWT">
    <property type="method" value="X-ray"/>
    <property type="resolution" value="2.38 A"/>
    <property type="chains" value="A/B/C/D=24-527"/>
</dbReference>
<dbReference type="PDBsum" id="4ACR"/>
<dbReference type="PDBsum" id="4AD7"/>
<dbReference type="PDBsum" id="4BWE"/>
<dbReference type="PDBsum" id="4YWT"/>
<dbReference type="SMR" id="P35052"/>
<dbReference type="BioGRID" id="109079">
    <property type="interactions" value="197"/>
</dbReference>
<dbReference type="FunCoup" id="P35052">
    <property type="interactions" value="649"/>
</dbReference>
<dbReference type="IntAct" id="P35052">
    <property type="interactions" value="55"/>
</dbReference>
<dbReference type="MINT" id="P35052"/>
<dbReference type="STRING" id="9606.ENSP00000264039"/>
<dbReference type="GlyConnect" id="1279">
    <property type="glycosylation" value="2 N-Linked glycans (1 site)"/>
</dbReference>
<dbReference type="GlyCosmos" id="P35052">
    <property type="glycosylation" value="6 sites, 3 glycans"/>
</dbReference>
<dbReference type="GlyGen" id="P35052">
    <property type="glycosylation" value="13 sites, 15 N-linked glycans (2 sites), 3 O-linked glycans (7 sites)"/>
</dbReference>
<dbReference type="iPTMnet" id="P35052"/>
<dbReference type="PhosphoSitePlus" id="P35052"/>
<dbReference type="SwissPalm" id="P35052"/>
<dbReference type="BioMuta" id="GPC1"/>
<dbReference type="DMDM" id="292495012"/>
<dbReference type="jPOST" id="P35052"/>
<dbReference type="MassIVE" id="P35052"/>
<dbReference type="PaxDb" id="9606-ENSP00000264039"/>
<dbReference type="PeptideAtlas" id="P35052"/>
<dbReference type="ProteomicsDB" id="54976">
    <molecule id="P35052-1"/>
</dbReference>
<dbReference type="Pumba" id="P35052"/>
<dbReference type="Antibodypedia" id="34516">
    <property type="antibodies" value="370 antibodies from 36 providers"/>
</dbReference>
<dbReference type="DNASU" id="2817"/>
<dbReference type="Ensembl" id="ENST00000264039.7">
    <molecule id="P35052-1"/>
    <property type="protein sequence ID" value="ENSP00000264039.2"/>
    <property type="gene ID" value="ENSG00000063660.9"/>
</dbReference>
<dbReference type="GeneID" id="2817"/>
<dbReference type="KEGG" id="hsa:2817"/>
<dbReference type="MANE-Select" id="ENST00000264039.7">
    <property type="protein sequence ID" value="ENSP00000264039.2"/>
    <property type="RefSeq nucleotide sequence ID" value="NM_002081.3"/>
    <property type="RefSeq protein sequence ID" value="NP_002072.2"/>
</dbReference>
<dbReference type="UCSC" id="uc002vyw.5">
    <molecule id="P35052-1"/>
    <property type="organism name" value="human"/>
</dbReference>
<dbReference type="AGR" id="HGNC:4449"/>
<dbReference type="CTD" id="2817"/>
<dbReference type="DisGeNET" id="2817"/>
<dbReference type="GeneCards" id="GPC1"/>
<dbReference type="HGNC" id="HGNC:4449">
    <property type="gene designation" value="GPC1"/>
</dbReference>
<dbReference type="HPA" id="ENSG00000063660">
    <property type="expression patterns" value="Tissue enhanced (skin)"/>
</dbReference>
<dbReference type="MIM" id="600395">
    <property type="type" value="gene"/>
</dbReference>
<dbReference type="neXtProt" id="NX_P35052"/>
<dbReference type="OpenTargets" id="ENSG00000063660"/>
<dbReference type="PharmGKB" id="PA28830"/>
<dbReference type="VEuPathDB" id="HostDB:ENSG00000063660"/>
<dbReference type="eggNOG" id="KOG3821">
    <property type="taxonomic scope" value="Eukaryota"/>
</dbReference>
<dbReference type="GeneTree" id="ENSGT01050000244897"/>
<dbReference type="HOGENOM" id="CLU_024658_2_0_1"/>
<dbReference type="InParanoid" id="P35052"/>
<dbReference type="OMA" id="CNSYCRN"/>
<dbReference type="OrthoDB" id="10010764at2759"/>
<dbReference type="PAN-GO" id="P35052">
    <property type="GO annotations" value="6 GO annotations based on evolutionary models"/>
</dbReference>
<dbReference type="PhylomeDB" id="P35052"/>
<dbReference type="TreeFam" id="TF105317"/>
<dbReference type="PathwayCommons" id="P35052"/>
<dbReference type="Reactome" id="R-HSA-1971475">
    <property type="pathway name" value="A tetrasaccharide linker sequence is required for GAG synthesis"/>
</dbReference>
<dbReference type="Reactome" id="R-HSA-2022928">
    <property type="pathway name" value="HS-GAG biosynthesis"/>
</dbReference>
<dbReference type="Reactome" id="R-HSA-2024096">
    <property type="pathway name" value="HS-GAG degradation"/>
</dbReference>
<dbReference type="Reactome" id="R-HSA-202733">
    <property type="pathway name" value="Cell surface interactions at the vascular wall"/>
</dbReference>
<dbReference type="Reactome" id="R-HSA-3560783">
    <property type="pathway name" value="Defective B4GALT7 causes EDS, progeroid type"/>
</dbReference>
<dbReference type="Reactome" id="R-HSA-3560801">
    <property type="pathway name" value="Defective B3GAT3 causes JDSSDHD"/>
</dbReference>
<dbReference type="Reactome" id="R-HSA-3656237">
    <property type="pathway name" value="Defective EXT2 causes exostoses 2"/>
</dbReference>
<dbReference type="Reactome" id="R-HSA-3656253">
    <property type="pathway name" value="Defective EXT1 causes exostoses 1, TRPS2 and CHDS"/>
</dbReference>
<dbReference type="Reactome" id="R-HSA-376176">
    <property type="pathway name" value="Signaling by ROBO receptors"/>
</dbReference>
<dbReference type="Reactome" id="R-HSA-4420332">
    <property type="pathway name" value="Defective B3GALT6 causes EDSP2 and SEMDJL1"/>
</dbReference>
<dbReference type="Reactome" id="R-HSA-9694614">
    <property type="pathway name" value="Attachment and Entry"/>
</dbReference>
<dbReference type="Reactome" id="R-HSA-975634">
    <property type="pathway name" value="Retinoid metabolism and transport"/>
</dbReference>
<dbReference type="Reactome" id="R-HSA-9820960">
    <property type="pathway name" value="Respiratory syncytial virus (RSV) attachment and entry"/>
</dbReference>
<dbReference type="Reactome" id="R-HSA-9833110">
    <property type="pathway name" value="RSV-host interactions"/>
</dbReference>
<dbReference type="SignaLink" id="P35052"/>
<dbReference type="SIGNOR" id="P35052"/>
<dbReference type="BioGRID-ORCS" id="2817">
    <property type="hits" value="14 hits in 1149 CRISPR screens"/>
</dbReference>
<dbReference type="CD-CODE" id="FB4E32DD">
    <property type="entry name" value="Presynaptic clusters and postsynaptic densities"/>
</dbReference>
<dbReference type="ChiTaRS" id="GPC1">
    <property type="organism name" value="human"/>
</dbReference>
<dbReference type="EvolutionaryTrace" id="P35052"/>
<dbReference type="GeneWiki" id="Glypican_1"/>
<dbReference type="GenomeRNAi" id="2817"/>
<dbReference type="Pharos" id="P35052">
    <property type="development level" value="Tbio"/>
</dbReference>
<dbReference type="PRO" id="PR:P35052"/>
<dbReference type="Proteomes" id="UP000005640">
    <property type="component" value="Chromosome 2"/>
</dbReference>
<dbReference type="RNAct" id="P35052">
    <property type="molecule type" value="protein"/>
</dbReference>
<dbReference type="Bgee" id="ENSG00000063660">
    <property type="expression patterns" value="Expressed in ventricular zone and 196 other cell types or tissues"/>
</dbReference>
<dbReference type="ExpressionAtlas" id="P35052">
    <property type="expression patterns" value="baseline and differential"/>
</dbReference>
<dbReference type="GO" id="GO:0009986">
    <property type="term" value="C:cell surface"/>
    <property type="evidence" value="ECO:0000318"/>
    <property type="project" value="GO_Central"/>
</dbReference>
<dbReference type="GO" id="GO:0062023">
    <property type="term" value="C:collagen-containing extracellular matrix"/>
    <property type="evidence" value="ECO:0007005"/>
    <property type="project" value="BHF-UCL"/>
</dbReference>
<dbReference type="GO" id="GO:0005829">
    <property type="term" value="C:cytosol"/>
    <property type="evidence" value="ECO:0000314"/>
    <property type="project" value="HPA"/>
</dbReference>
<dbReference type="GO" id="GO:0005768">
    <property type="term" value="C:endosome"/>
    <property type="evidence" value="ECO:0007669"/>
    <property type="project" value="UniProtKB-SubCell"/>
</dbReference>
<dbReference type="GO" id="GO:0070062">
    <property type="term" value="C:extracellular exosome"/>
    <property type="evidence" value="ECO:0007005"/>
    <property type="project" value="UniProtKB"/>
</dbReference>
<dbReference type="GO" id="GO:0031012">
    <property type="term" value="C:extracellular matrix"/>
    <property type="evidence" value="ECO:0000250"/>
    <property type="project" value="UniProtKB"/>
</dbReference>
<dbReference type="GO" id="GO:0005576">
    <property type="term" value="C:extracellular region"/>
    <property type="evidence" value="ECO:0007005"/>
    <property type="project" value="BHF-UCL"/>
</dbReference>
<dbReference type="GO" id="GO:0005615">
    <property type="term" value="C:extracellular space"/>
    <property type="evidence" value="ECO:0000304"/>
    <property type="project" value="ProtInc"/>
</dbReference>
<dbReference type="GO" id="GO:0005796">
    <property type="term" value="C:Golgi lumen"/>
    <property type="evidence" value="ECO:0000304"/>
    <property type="project" value="Reactome"/>
</dbReference>
<dbReference type="GO" id="GO:0043202">
    <property type="term" value="C:lysosomal lumen"/>
    <property type="evidence" value="ECO:0000304"/>
    <property type="project" value="Reactome"/>
</dbReference>
<dbReference type="GO" id="GO:0045121">
    <property type="term" value="C:membrane raft"/>
    <property type="evidence" value="ECO:0000250"/>
    <property type="project" value="UniProtKB"/>
</dbReference>
<dbReference type="GO" id="GO:0005654">
    <property type="term" value="C:nucleoplasm"/>
    <property type="evidence" value="ECO:0000314"/>
    <property type="project" value="HPA"/>
</dbReference>
<dbReference type="GO" id="GO:0005886">
    <property type="term" value="C:plasma membrane"/>
    <property type="evidence" value="ECO:0000314"/>
    <property type="project" value="HPA"/>
</dbReference>
<dbReference type="GO" id="GO:0098552">
    <property type="term" value="C:side of membrane"/>
    <property type="evidence" value="ECO:0007669"/>
    <property type="project" value="UniProtKB-KW"/>
</dbReference>
<dbReference type="GO" id="GO:0045202">
    <property type="term" value="C:synapse"/>
    <property type="evidence" value="ECO:0000318"/>
    <property type="project" value="GO_Central"/>
</dbReference>
<dbReference type="GO" id="GO:0005507">
    <property type="term" value="F:copper ion binding"/>
    <property type="evidence" value="ECO:0000314"/>
    <property type="project" value="UniProtKB"/>
</dbReference>
<dbReference type="GO" id="GO:0017134">
    <property type="term" value="F:fibroblast growth factor binding"/>
    <property type="evidence" value="ECO:0000250"/>
    <property type="project" value="UniProtKB"/>
</dbReference>
<dbReference type="GO" id="GO:0043236">
    <property type="term" value="F:laminin binding"/>
    <property type="evidence" value="ECO:0000250"/>
    <property type="project" value="UniProtKB"/>
</dbReference>
<dbReference type="GO" id="GO:0016477">
    <property type="term" value="P:cell migration"/>
    <property type="evidence" value="ECO:0000318"/>
    <property type="project" value="GO_Central"/>
</dbReference>
<dbReference type="GO" id="GO:0030200">
    <property type="term" value="P:heparan sulfate proteoglycan catabolic process"/>
    <property type="evidence" value="ECO:0000314"/>
    <property type="project" value="UniProtKB"/>
</dbReference>
<dbReference type="GO" id="GO:0032288">
    <property type="term" value="P:myelin assembly"/>
    <property type="evidence" value="ECO:0000250"/>
    <property type="project" value="UniProtKB"/>
</dbReference>
<dbReference type="GO" id="GO:0040037">
    <property type="term" value="P:negative regulation of fibroblast growth factor receptor signaling pathway"/>
    <property type="evidence" value="ECO:0000250"/>
    <property type="project" value="UniProtKB"/>
</dbReference>
<dbReference type="GO" id="GO:2001016">
    <property type="term" value="P:positive regulation of skeletal muscle cell differentiation"/>
    <property type="evidence" value="ECO:0000250"/>
    <property type="project" value="UniProtKB"/>
</dbReference>
<dbReference type="GO" id="GO:1905475">
    <property type="term" value="P:regulation of protein localization to membrane"/>
    <property type="evidence" value="ECO:0000318"/>
    <property type="project" value="GO_Central"/>
</dbReference>
<dbReference type="GO" id="GO:0014037">
    <property type="term" value="P:Schwann cell differentiation"/>
    <property type="evidence" value="ECO:0000250"/>
    <property type="project" value="UniProtKB"/>
</dbReference>
<dbReference type="InterPro" id="IPR001863">
    <property type="entry name" value="Glypican"/>
</dbReference>
<dbReference type="InterPro" id="IPR019803">
    <property type="entry name" value="Glypican_CS"/>
</dbReference>
<dbReference type="PANTHER" id="PTHR10822">
    <property type="entry name" value="GLYPICAN"/>
    <property type="match status" value="1"/>
</dbReference>
<dbReference type="PANTHER" id="PTHR10822:SF8">
    <property type="entry name" value="GLYPICAN-1"/>
    <property type="match status" value="1"/>
</dbReference>
<dbReference type="Pfam" id="PF01153">
    <property type="entry name" value="Glypican"/>
    <property type="match status" value="1"/>
</dbReference>
<dbReference type="PROSITE" id="PS01207">
    <property type="entry name" value="GLYPICAN"/>
    <property type="match status" value="1"/>
</dbReference>
<proteinExistence type="evidence at protein level"/>
<reference key="1">
    <citation type="journal article" date="1990" name="J. Cell Biol.">
        <title>Molecular cloning of a phosphatidylinositol-anchored membrane heparan sulfate proteoglycan from human lung fibroblasts.</title>
        <authorList>
            <person name="David G."/>
            <person name="Lories V."/>
            <person name="Decock B."/>
            <person name="Marynen P."/>
            <person name="Cassiman J.-J."/>
            <person name="van den Berghe H."/>
        </authorList>
    </citation>
    <scope>NUCLEOTIDE SEQUENCE [MRNA] (ISOFORM 1)</scope>
    <scope>PROTEIN SEQUENCE OF 24-53; 100-118 AND 298-317</scope>
    <scope>GPI-ANCHOR AT SER-530</scope>
    <scope>GLYCOSYLATION AT ASN-116</scope>
    <scope>VARIANT GLY-500</scope>
    <source>
        <tissue>Lung fibroblast</tissue>
    </source>
</reference>
<reference key="2">
    <citation type="journal article" date="2004" name="Nat. Genet.">
        <title>Complete sequencing and characterization of 21,243 full-length human cDNAs.</title>
        <authorList>
            <person name="Ota T."/>
            <person name="Suzuki Y."/>
            <person name="Nishikawa T."/>
            <person name="Otsuki T."/>
            <person name="Sugiyama T."/>
            <person name="Irie R."/>
            <person name="Wakamatsu A."/>
            <person name="Hayashi K."/>
            <person name="Sato H."/>
            <person name="Nagai K."/>
            <person name="Kimura K."/>
            <person name="Makita H."/>
            <person name="Sekine M."/>
            <person name="Obayashi M."/>
            <person name="Nishi T."/>
            <person name="Shibahara T."/>
            <person name="Tanaka T."/>
            <person name="Ishii S."/>
            <person name="Yamamoto J."/>
            <person name="Saito K."/>
            <person name="Kawai Y."/>
            <person name="Isono Y."/>
            <person name="Nakamura Y."/>
            <person name="Nagahari K."/>
            <person name="Murakami K."/>
            <person name="Yasuda T."/>
            <person name="Iwayanagi T."/>
            <person name="Wagatsuma M."/>
            <person name="Shiratori A."/>
            <person name="Sudo H."/>
            <person name="Hosoiri T."/>
            <person name="Kaku Y."/>
            <person name="Kodaira H."/>
            <person name="Kondo H."/>
            <person name="Sugawara M."/>
            <person name="Takahashi M."/>
            <person name="Kanda K."/>
            <person name="Yokoi T."/>
            <person name="Furuya T."/>
            <person name="Kikkawa E."/>
            <person name="Omura Y."/>
            <person name="Abe K."/>
            <person name="Kamihara K."/>
            <person name="Katsuta N."/>
            <person name="Sato K."/>
            <person name="Tanikawa M."/>
            <person name="Yamazaki M."/>
            <person name="Ninomiya K."/>
            <person name="Ishibashi T."/>
            <person name="Yamashita H."/>
            <person name="Murakawa K."/>
            <person name="Fujimori K."/>
            <person name="Tanai H."/>
            <person name="Kimata M."/>
            <person name="Watanabe M."/>
            <person name="Hiraoka S."/>
            <person name="Chiba Y."/>
            <person name="Ishida S."/>
            <person name="Ono Y."/>
            <person name="Takiguchi S."/>
            <person name="Watanabe S."/>
            <person name="Yosida M."/>
            <person name="Hotuta T."/>
            <person name="Kusano J."/>
            <person name="Kanehori K."/>
            <person name="Takahashi-Fujii A."/>
            <person name="Hara H."/>
            <person name="Tanase T.-O."/>
            <person name="Nomura Y."/>
            <person name="Togiya S."/>
            <person name="Komai F."/>
            <person name="Hara R."/>
            <person name="Takeuchi K."/>
            <person name="Arita M."/>
            <person name="Imose N."/>
            <person name="Musashino K."/>
            <person name="Yuuki H."/>
            <person name="Oshima A."/>
            <person name="Sasaki N."/>
            <person name="Aotsuka S."/>
            <person name="Yoshikawa Y."/>
            <person name="Matsunawa H."/>
            <person name="Ichihara T."/>
            <person name="Shiohata N."/>
            <person name="Sano S."/>
            <person name="Moriya S."/>
            <person name="Momiyama H."/>
            <person name="Satoh N."/>
            <person name="Takami S."/>
            <person name="Terashima Y."/>
            <person name="Suzuki O."/>
            <person name="Nakagawa S."/>
            <person name="Senoh A."/>
            <person name="Mizoguchi H."/>
            <person name="Goto Y."/>
            <person name="Shimizu F."/>
            <person name="Wakebe H."/>
            <person name="Hishigaki H."/>
            <person name="Watanabe T."/>
            <person name="Sugiyama A."/>
            <person name="Takemoto M."/>
            <person name="Kawakami B."/>
            <person name="Yamazaki M."/>
            <person name="Watanabe K."/>
            <person name="Kumagai A."/>
            <person name="Itakura S."/>
            <person name="Fukuzumi Y."/>
            <person name="Fujimori Y."/>
            <person name="Komiyama M."/>
            <person name="Tashiro H."/>
            <person name="Tanigami A."/>
            <person name="Fujiwara T."/>
            <person name="Ono T."/>
            <person name="Yamada K."/>
            <person name="Fujii Y."/>
            <person name="Ozaki K."/>
            <person name="Hirao M."/>
            <person name="Ohmori Y."/>
            <person name="Kawabata A."/>
            <person name="Hikiji T."/>
            <person name="Kobatake N."/>
            <person name="Inagaki H."/>
            <person name="Ikema Y."/>
            <person name="Okamoto S."/>
            <person name="Okitani R."/>
            <person name="Kawakami T."/>
            <person name="Noguchi S."/>
            <person name="Itoh T."/>
            <person name="Shigeta K."/>
            <person name="Senba T."/>
            <person name="Matsumura K."/>
            <person name="Nakajima Y."/>
            <person name="Mizuno T."/>
            <person name="Morinaga M."/>
            <person name="Sasaki M."/>
            <person name="Togashi T."/>
            <person name="Oyama M."/>
            <person name="Hata H."/>
            <person name="Watanabe M."/>
            <person name="Komatsu T."/>
            <person name="Mizushima-Sugano J."/>
            <person name="Satoh T."/>
            <person name="Shirai Y."/>
            <person name="Takahashi Y."/>
            <person name="Nakagawa K."/>
            <person name="Okumura K."/>
            <person name="Nagase T."/>
            <person name="Nomura N."/>
            <person name="Kikuchi H."/>
            <person name="Masuho Y."/>
            <person name="Yamashita R."/>
            <person name="Nakai K."/>
            <person name="Yada T."/>
            <person name="Nakamura Y."/>
            <person name="Ohara O."/>
            <person name="Isogai T."/>
            <person name="Sugano S."/>
        </authorList>
    </citation>
    <scope>NUCLEOTIDE SEQUENCE [LARGE SCALE MRNA] (ISOFORM 2)</scope>
    <source>
        <tissue>Brain</tissue>
        <tissue>Tongue</tissue>
    </source>
</reference>
<reference key="3">
    <citation type="journal article" date="2005" name="Nature">
        <title>Generation and annotation of the DNA sequences of human chromosomes 2 and 4.</title>
        <authorList>
            <person name="Hillier L.W."/>
            <person name="Graves T.A."/>
            <person name="Fulton R.S."/>
            <person name="Fulton L.A."/>
            <person name="Pepin K.H."/>
            <person name="Minx P."/>
            <person name="Wagner-McPherson C."/>
            <person name="Layman D."/>
            <person name="Wylie K."/>
            <person name="Sekhon M."/>
            <person name="Becker M.C."/>
            <person name="Fewell G.A."/>
            <person name="Delehaunty K.D."/>
            <person name="Miner T.L."/>
            <person name="Nash W.E."/>
            <person name="Kremitzki C."/>
            <person name="Oddy L."/>
            <person name="Du H."/>
            <person name="Sun H."/>
            <person name="Bradshaw-Cordum H."/>
            <person name="Ali J."/>
            <person name="Carter J."/>
            <person name="Cordes M."/>
            <person name="Harris A."/>
            <person name="Isak A."/>
            <person name="van Brunt A."/>
            <person name="Nguyen C."/>
            <person name="Du F."/>
            <person name="Courtney L."/>
            <person name="Kalicki J."/>
            <person name="Ozersky P."/>
            <person name="Abbott S."/>
            <person name="Armstrong J."/>
            <person name="Belter E.A."/>
            <person name="Caruso L."/>
            <person name="Cedroni M."/>
            <person name="Cotton M."/>
            <person name="Davidson T."/>
            <person name="Desai A."/>
            <person name="Elliott G."/>
            <person name="Erb T."/>
            <person name="Fronick C."/>
            <person name="Gaige T."/>
            <person name="Haakenson W."/>
            <person name="Haglund K."/>
            <person name="Holmes A."/>
            <person name="Harkins R."/>
            <person name="Kim K."/>
            <person name="Kruchowski S.S."/>
            <person name="Strong C.M."/>
            <person name="Grewal N."/>
            <person name="Goyea E."/>
            <person name="Hou S."/>
            <person name="Levy A."/>
            <person name="Martinka S."/>
            <person name="Mead K."/>
            <person name="McLellan M.D."/>
            <person name="Meyer R."/>
            <person name="Randall-Maher J."/>
            <person name="Tomlinson C."/>
            <person name="Dauphin-Kohlberg S."/>
            <person name="Kozlowicz-Reilly A."/>
            <person name="Shah N."/>
            <person name="Swearengen-Shahid S."/>
            <person name="Snider J."/>
            <person name="Strong J.T."/>
            <person name="Thompson J."/>
            <person name="Yoakum M."/>
            <person name="Leonard S."/>
            <person name="Pearman C."/>
            <person name="Trani L."/>
            <person name="Radionenko M."/>
            <person name="Waligorski J.E."/>
            <person name="Wang C."/>
            <person name="Rock S.M."/>
            <person name="Tin-Wollam A.-M."/>
            <person name="Maupin R."/>
            <person name="Latreille P."/>
            <person name="Wendl M.C."/>
            <person name="Yang S.-P."/>
            <person name="Pohl C."/>
            <person name="Wallis J.W."/>
            <person name="Spieth J."/>
            <person name="Bieri T.A."/>
            <person name="Berkowicz N."/>
            <person name="Nelson J.O."/>
            <person name="Osborne J."/>
            <person name="Ding L."/>
            <person name="Meyer R."/>
            <person name="Sabo A."/>
            <person name="Shotland Y."/>
            <person name="Sinha P."/>
            <person name="Wohldmann P.E."/>
            <person name="Cook L.L."/>
            <person name="Hickenbotham M.T."/>
            <person name="Eldred J."/>
            <person name="Williams D."/>
            <person name="Jones T.A."/>
            <person name="She X."/>
            <person name="Ciccarelli F.D."/>
            <person name="Izaurralde E."/>
            <person name="Taylor J."/>
            <person name="Schmutz J."/>
            <person name="Myers R.M."/>
            <person name="Cox D.R."/>
            <person name="Huang X."/>
            <person name="McPherson J.D."/>
            <person name="Mardis E.R."/>
            <person name="Clifton S.W."/>
            <person name="Warren W.C."/>
            <person name="Chinwalla A.T."/>
            <person name="Eddy S.R."/>
            <person name="Marra M.A."/>
            <person name="Ovcharenko I."/>
            <person name="Furey T.S."/>
            <person name="Miller W."/>
            <person name="Eichler E.E."/>
            <person name="Bork P."/>
            <person name="Suyama M."/>
            <person name="Torrents D."/>
            <person name="Waterston R.H."/>
            <person name="Wilson R.K."/>
        </authorList>
    </citation>
    <scope>NUCLEOTIDE SEQUENCE [LARGE SCALE GENOMIC DNA]</scope>
</reference>
<reference key="4">
    <citation type="submission" date="2005-07" db="EMBL/GenBank/DDBJ databases">
        <authorList>
            <person name="Mural R.J."/>
            <person name="Istrail S."/>
            <person name="Sutton G."/>
            <person name="Florea L."/>
            <person name="Halpern A.L."/>
            <person name="Mobarry C.M."/>
            <person name="Lippert R."/>
            <person name="Walenz B."/>
            <person name="Shatkay H."/>
            <person name="Dew I."/>
            <person name="Miller J.R."/>
            <person name="Flanigan M.J."/>
            <person name="Edwards N.J."/>
            <person name="Bolanos R."/>
            <person name="Fasulo D."/>
            <person name="Halldorsson B.V."/>
            <person name="Hannenhalli S."/>
            <person name="Turner R."/>
            <person name="Yooseph S."/>
            <person name="Lu F."/>
            <person name="Nusskern D.R."/>
            <person name="Shue B.C."/>
            <person name="Zheng X.H."/>
            <person name="Zhong F."/>
            <person name="Delcher A.L."/>
            <person name="Huson D.H."/>
            <person name="Kravitz S.A."/>
            <person name="Mouchard L."/>
            <person name="Reinert K."/>
            <person name="Remington K.A."/>
            <person name="Clark A.G."/>
            <person name="Waterman M.S."/>
            <person name="Eichler E.E."/>
            <person name="Adams M.D."/>
            <person name="Hunkapiller M.W."/>
            <person name="Myers E.W."/>
            <person name="Venter J.C."/>
        </authorList>
    </citation>
    <scope>NUCLEOTIDE SEQUENCE [LARGE SCALE GENOMIC DNA]</scope>
</reference>
<reference key="5">
    <citation type="journal article" date="2004" name="Genome Res.">
        <title>The status, quality, and expansion of the NIH full-length cDNA project: the Mammalian Gene Collection (MGC).</title>
        <authorList>
            <consortium name="The MGC Project Team"/>
        </authorList>
    </citation>
    <scope>NUCLEOTIDE SEQUENCE [LARGE SCALE MRNA] (ISOFORM 1)</scope>
    <scope>VARIANT GLY-500</scope>
    <source>
        <tissue>Salivary gland</tissue>
    </source>
</reference>
<reference key="6">
    <citation type="journal article" date="2003" name="J. Biol. Chem.">
        <title>Prion, amyloid beta-derived Cu(II) ions, or free Zn(II) ions support S-nitroso-dependent autocleavage of glypican-1 heparan sulfate.</title>
        <authorList>
            <person name="Mani K."/>
            <person name="Cheng F."/>
            <person name="Havsmark B."/>
            <person name="Jonsson M."/>
            <person name="Belting M."/>
            <person name="Fransson L.A."/>
        </authorList>
    </citation>
    <scope>COPPER-BINDING</scope>
    <scope>S-NITROSYLATION</scope>
    <scope>GLYCOSYLATION</scope>
</reference>
<reference key="7">
    <citation type="journal article" date="2004" name="FASEB J.">
        <title>Glypican-1 as an Abeta binding HSPG in the human brain: its localization in DIG domains and possible roles in the pathogenesis of Alzheimer's disease.</title>
        <authorList>
            <person name="Watanabe N."/>
            <person name="Araki W."/>
            <person name="Chui D.H."/>
            <person name="Makifuchi T."/>
            <person name="Ihara Y."/>
            <person name="Tabira T."/>
        </authorList>
    </citation>
    <scope>SUBCELLULAR LOCATION</scope>
    <scope>POSSIBLE ASSOCIATION WITH ALZHEIMER DISEASE</scope>
</reference>
<reference key="8">
    <citation type="journal article" date="2006" name="Glycobiology">
        <title>Defective nitric oxide-dependent, deaminative cleavage of glypican-1 heparan sulfate in Niemann-Pick C1 fibroblasts.</title>
        <authorList>
            <person name="Mani K."/>
            <person name="Cheng F."/>
            <person name="Fransson L.A."/>
        </authorList>
    </citation>
    <scope>S-NITROSYLATION</scope>
    <scope>ASSOCIATION WITH NIEMANN-PICK TYPE C1 DISEASE</scope>
</reference>
<reference key="9">
    <citation type="journal article" date="2006" name="Glycobiology">
        <title>Constitutive and vitamin C-induced, NO-catalyzed release of heparan sulfate from recycling glypican-1 in late endosomes.</title>
        <authorList>
            <person name="Mani K."/>
            <person name="Cheng F."/>
            <person name="Fransson L.A."/>
        </authorList>
    </citation>
    <scope>SUBCELLULAR LOCATION</scope>
    <scope>S-NITROSYLATION</scope>
    <scope>GLYCOSYLATION</scope>
</reference>
<reference key="10">
    <citation type="journal article" date="2009" name="Biochemistry">
        <title>Chemical and thermal unfolding of glypican-1: protective effect of heparan sulfate against heat-induced irreversible aggregation.</title>
        <authorList>
            <person name="Svensson G."/>
            <person name="Linse S."/>
            <person name="Mani K."/>
        </authorList>
    </citation>
    <scope>GLYCOSYLATION</scope>
    <scope>LACK OF GLYCOSYLATION AT SER-55</scope>
</reference>
<reference key="11">
    <citation type="journal article" date="2009" name="Glycoconj. J.">
        <title>S-Nitrosylation of secreted recombinant human glypican-1.</title>
        <authorList>
            <person name="Svensson G."/>
            <person name="Mani K."/>
        </authorList>
    </citation>
    <scope>S-NITROSYLATION</scope>
    <scope>SUBCELLULAR LOCATION</scope>
    <scope>GLYCOSYLATION</scope>
</reference>
<reference key="12">
    <citation type="journal article" date="2009" name="PLoS Pathog.">
        <title>Glypican-1 mediates both prion protein lipid raft association and disease isoform formation.</title>
        <authorList>
            <person name="Taylor D.R."/>
            <person name="Whitehouse I.J."/>
            <person name="Hooper N.M."/>
        </authorList>
    </citation>
    <scope>FUNCTION</scope>
    <scope>SUBCELLULAR LOCATION</scope>
</reference>
<reference key="13">
    <citation type="journal article" date="2011" name="Biochemistry">
        <title>The structural role of N-linked glycans on human glypican-1.</title>
        <authorList>
            <person name="Svensson G."/>
            <person name="Hyrenius Wittsten A."/>
            <person name="Linse S."/>
            <person name="Mani K."/>
        </authorList>
    </citation>
    <scope>GLYCOSYLATION AT ASN-79 AND ASN-116</scope>
    <scope>MUTAGENESIS OF ASN-79 AND ASN-116</scope>
</reference>
<reference key="14">
    <citation type="journal article" date="2011" name="J. Biol. Chem.">
        <title>Suppression of amyloid beta A11 antibody immunoreactivity by vitamin C: possible role of heparan sulfate oligosaccharides derived from glypican-1 by ascorbate-induced, nitric oxide (NO)-catalyzed degradation.</title>
        <authorList>
            <person name="Cheng F."/>
            <person name="Cappai R."/>
            <person name="Ciccotosto G.D."/>
            <person name="Svensson G."/>
            <person name="Multhaup G."/>
            <person name="Fransson L.A."/>
            <person name="Mani K."/>
        </authorList>
    </citation>
    <scope>S-NITROSYLATION</scope>
    <scope>GLYCOSYLATION</scope>
    <scope>FUNCTION</scope>
</reference>
<reference key="15">
    <citation type="journal article" date="2012" name="J. Biol. Chem.">
        <title>Crystal structure of N-glycosylated human glypican-1 core protein: Structure of two loops evolutionarily conserved in vertebrate glypican-1.</title>
        <authorList>
            <person name="Svensson G."/>
            <person name="Awad W."/>
            <person name="Hakansson M."/>
            <person name="Mani K."/>
            <person name="Logan D.T."/>
        </authorList>
    </citation>
    <scope>X-RAY CRYSTALLOGRAPHY (2.5 ANGSTROMS)</scope>
    <scope>DISULFIDE BONDS</scope>
    <scope>LACK OF GLYCOSYLATION AT SER-55</scope>
    <scope>GLYCOSYLATION AT ASN-79 AND ASN-116</scope>
</reference>
<reference key="16">
    <citation type="journal article" date="2006" name="Science">
        <title>The consensus coding sequences of human breast and colorectal cancers.</title>
        <authorList>
            <person name="Sjoeblom T."/>
            <person name="Jones S."/>
            <person name="Wood L.D."/>
            <person name="Parsons D.W."/>
            <person name="Lin J."/>
            <person name="Barber T.D."/>
            <person name="Mandelker D."/>
            <person name="Leary R.J."/>
            <person name="Ptak J."/>
            <person name="Silliman N."/>
            <person name="Szabo S."/>
            <person name="Buckhaults P."/>
            <person name="Farrell C."/>
            <person name="Meeh P."/>
            <person name="Markowitz S.D."/>
            <person name="Willis J."/>
            <person name="Dawson D."/>
            <person name="Willson J.K.V."/>
            <person name="Gazdar A.F."/>
            <person name="Hartigan J."/>
            <person name="Wu L."/>
            <person name="Liu C."/>
            <person name="Parmigiani G."/>
            <person name="Park B.H."/>
            <person name="Bachman K.E."/>
            <person name="Papadopoulos N."/>
            <person name="Vogelstein B."/>
            <person name="Kinzler K.W."/>
            <person name="Velculescu V.E."/>
        </authorList>
    </citation>
    <scope>VARIANT [LARGE SCALE ANALYSIS] ASP-337</scope>
</reference>
<sequence>MELRARGWWLLCAAAALVACARGDPASKSRSCGEVRQIYGAKGFSLSDVPQAEISGEHLRICPQGYTCCTSEMEENLANRSHAELETALRDSSRVLQAMLATQLRSFDDHFQHLLNDSERTLQATFPGAFGELYTQNARAFRDLYSELRLYYRGANLHLEETLAEFWARLLERLFKQLHPQLLLPDDYLDCLGKQAEALRPFGEAPRELRLRATRAFVAARSFVQGLGVASDVVRKVAQVPLGPECSRAVMKLVYCAHCLGVPGARPCPDYCRNVLKGCLANQADLDAEWRNLLDSMVLITDKFWGTSGVESVIGSVHTWLAEAINALQDNRDTLTAKVIQGCGNPKVNPQGPGPEEKRRRGKLAPRERPPSGTLEKLVSEAKAQLRDVQDFWISLPGTLCSEKMALSTASDDRCWNGMARGRYLPEVMGDGLANQINNPEVEVDITKPDMTIRQQIMQLKIMTNRLRSAYNGNDVDFQDASDDGSGSGSGDGCLDDLCSRKVSRKSSSSRTPLTHALPGLSEQEGQKTSAASCPQPPTFLLPLLLFLALTVARPRWR</sequence>
<gene>
    <name type="primary">GPC1</name>
</gene>
<evidence type="ECO:0000250" key="1"/>
<evidence type="ECO:0000256" key="2">
    <source>
        <dbReference type="SAM" id="MobiDB-lite"/>
    </source>
</evidence>
<evidence type="ECO:0000269" key="3">
    <source>
    </source>
</evidence>
<evidence type="ECO:0000269" key="4">
    <source>
    </source>
</evidence>
<evidence type="ECO:0000269" key="5">
    <source>
    </source>
</evidence>
<evidence type="ECO:0000269" key="6">
    <source>
    </source>
</evidence>
<evidence type="ECO:0000269" key="7">
    <source>
    </source>
</evidence>
<evidence type="ECO:0000269" key="8">
    <source>
    </source>
</evidence>
<evidence type="ECO:0000269" key="9">
    <source>
    </source>
</evidence>
<evidence type="ECO:0000269" key="10">
    <source>
    </source>
</evidence>
<evidence type="ECO:0000269" key="11">
    <source>
    </source>
</evidence>
<evidence type="ECO:0000269" key="12">
    <source>
    </source>
</evidence>
<evidence type="ECO:0000269" key="13">
    <source>
    </source>
</evidence>
<evidence type="ECO:0000269" key="14">
    <source>
    </source>
</evidence>
<evidence type="ECO:0000269" key="15">
    <source>
    </source>
</evidence>
<evidence type="ECO:0000303" key="16">
    <source>
    </source>
</evidence>
<evidence type="ECO:0000305" key="17"/>
<evidence type="ECO:0000305" key="18">
    <source>
    </source>
</evidence>
<evidence type="ECO:0007829" key="19">
    <source>
        <dbReference type="PDB" id="4BWE"/>
    </source>
</evidence>
<evidence type="ECO:0007829" key="20">
    <source>
        <dbReference type="PDB" id="4YWT"/>
    </source>
</evidence>
<comment type="function">
    <text evidence="1 11 13">Cell surface proteoglycan that bears heparan sulfate. Binds, via the heparan sulfate side chains, alpha-4 (V) collagen and participates in Schwann cell myelination (By similarity). May act as a catalyst in increasing the rate of conversion of prion protein PRPN(C) to PRNP(Sc) via associating (via the heparan sulfate side chains) with both forms of PRPN, targeting them to lipid rafts and facilitating their interaction. Required for proper skeletal muscle differentiation by sequestering FGF2 in lipid rafts preventing its binding to receptors (FGFRs) and inhibiting the FGF-mediated signaling.</text>
</comment>
<comment type="interaction">
    <interactant intactId="EBI-8307554">
        <id>P35052</id>
    </interactant>
    <interactant intactId="EBI-20895185">
        <id>Q6PRD1</id>
        <label>GPR179</label>
    </interactant>
    <organismsDiffer>false</organismsDiffer>
    <experiments>2</experiments>
</comment>
<comment type="interaction">
    <interactant intactId="EBI-8307554">
        <id>P35052</id>
    </interactant>
    <interactant intactId="EBI-776313">
        <id>Q8C419</id>
        <label>Gpr158</label>
    </interactant>
    <organismsDiffer>true</organismsDiffer>
    <experiments>3</experiments>
</comment>
<comment type="subcellular location">
    <subcellularLocation>
        <location>Cell membrane</location>
        <topology>Lipid-anchor</topology>
        <topology>GPI-anchor</topology>
        <orientation>Extracellular side</orientation>
    </subcellularLocation>
    <subcellularLocation>
        <location>Endosome</location>
    </subcellularLocation>
    <text>S-nitrosylated form recycled in endosomes. Localizes to CAV1-containing vesicles close to the cell surface. Cleavage of heparan sulfate side chains takes place mainly in late endosomes. Associates with both forms of PRNP in lipid rafts. Colocalizes with APP in perinuclear compartments and with CP in intracellular compartments. Associates with fibrillar APP amyloid-beta peptides in lipid rafts in Alzheimer disease brains.</text>
</comment>
<comment type="subcellular location">
    <molecule>Secreted glypican-1</molecule>
    <subcellularLocation>
        <location>Secreted</location>
        <location>Extracellular space</location>
    </subcellularLocation>
</comment>
<comment type="alternative products">
    <event type="alternative splicing"/>
    <isoform>
        <id>P35052-1</id>
        <name>1</name>
        <sequence type="displayed"/>
    </isoform>
    <isoform>
        <id>P35052-2</id>
        <name>2</name>
        <sequence type="described" ref="VSP_055225 VSP_055226 VSP_055227"/>
    </isoform>
</comment>
<comment type="PTM">
    <text>S-nitrosylated in a Cu(2+)-dependent manner. Nitric acid (NO) is released from the nitrosylated cysteines by ascorbate or by some other reducing agent, in a Cu(2+) or Zn(2+) dependent manner. This free nitric oxide is then capable of cleaving the heparan sulfate side chains.</text>
</comment>
<comment type="PTM">
    <text evidence="3 8 9 10 12 13 14 15">N- and O-glycosylated. N-glycosylation is mainly of the complex type containing sialic acid. O-glycosylated with heparan sulfate. The heparan sulfate chains can be cleaved either by the action of heparanase or, degraded by a deaminative process that uses nitric oxide (NO) released from the S-nitrosylated cysteines. This process is triggered by ascorbate, or by some other reducing agent, in a Cu(2+)- or Zn(2+) dependent manner. Cu(2+) ions are provided by ceruloproteins such as APP, PRNP or CP which associate with GCP1 in intracellular compartments or lipid rafts.</text>
</comment>
<comment type="PTM">
    <text>This cell-associated glypican is further processed to give rise to a medium-released species.</text>
</comment>
<comment type="disease">
    <text evidence="4">Associates (via the heparan sulfate side chains) with fibrillar APP amyloid-beta peptides in primitive and classic amyloid plaques and may be involved in the deposition of these senile plaques in the Alzheimer disease (AD) brain (PubMed:15084524).</text>
</comment>
<comment type="disease">
    <text evidence="6">Misprocessing of GPC1 is found in fibroblasts of patients with Niemann-Pick Type C1 disease. This is due to the defective deaminative degradation of heparan sulfate chains (PubMed:16645004).</text>
</comment>
<comment type="similarity">
    <text evidence="17">Belongs to the glypican family.</text>
</comment>